<name>PURA_RHIE6</name>
<evidence type="ECO:0000255" key="1">
    <source>
        <dbReference type="HAMAP-Rule" id="MF_00011"/>
    </source>
</evidence>
<sequence length="432" mass="46533">MTNVVVVGSQWGDEGKGKIVDWLSERADIVVRYQGGHNAGHTLVIDGTSYKLSLLPSGVVRPGKMAVIGNGVVVDPHALIAEIEKLAGQGVTITPDNLRVADNATLILSLHRELDAMREDAASNSGTKIGTTRRGIGPAYEDKVGRRAIRVMDLADLDSLPGKVDRILTHHNALRRGLGVAEVSHQTIMDELTSVAERVLPFRDTVWLFLDKERRRGARILFEGAQGSLLDIDHGTYPFVTSSNTVAGQAAAGSGMGPGSLGYILGITKAYTTRVGEGPFPTELKDEIGEFLGQKGHEFGVVTGRKRRCGWFDAALVRQSVATNGITGIALTKLDVLDGLEELKICVGYMLDGEQIDHLPASQGAQARVEPIYITLEGWKESTVGARSWADLPAQAIKYVRQVEELIGAPVALLSTSPERDDTILVTDPFED</sequence>
<accession>B3PY13</accession>
<protein>
    <recommendedName>
        <fullName evidence="1">Adenylosuccinate synthetase</fullName>
        <shortName evidence="1">AMPSase</shortName>
        <shortName evidence="1">AdSS</shortName>
        <ecNumber evidence="1">6.3.4.4</ecNumber>
    </recommendedName>
    <alternativeName>
        <fullName evidence="1">IMP--aspartate ligase</fullName>
    </alternativeName>
</protein>
<dbReference type="EC" id="6.3.4.4" evidence="1"/>
<dbReference type="EMBL" id="CP001074">
    <property type="protein sequence ID" value="ACE92534.1"/>
    <property type="molecule type" value="Genomic_DNA"/>
</dbReference>
<dbReference type="SMR" id="B3PY13"/>
<dbReference type="KEGG" id="rec:RHECIAT_CH0003588"/>
<dbReference type="eggNOG" id="COG0104">
    <property type="taxonomic scope" value="Bacteria"/>
</dbReference>
<dbReference type="HOGENOM" id="CLU_029848_0_0_5"/>
<dbReference type="UniPathway" id="UPA00075">
    <property type="reaction ID" value="UER00335"/>
</dbReference>
<dbReference type="Proteomes" id="UP000008817">
    <property type="component" value="Chromosome"/>
</dbReference>
<dbReference type="GO" id="GO:0005737">
    <property type="term" value="C:cytoplasm"/>
    <property type="evidence" value="ECO:0007669"/>
    <property type="project" value="UniProtKB-SubCell"/>
</dbReference>
<dbReference type="GO" id="GO:0004019">
    <property type="term" value="F:adenylosuccinate synthase activity"/>
    <property type="evidence" value="ECO:0007669"/>
    <property type="project" value="UniProtKB-UniRule"/>
</dbReference>
<dbReference type="GO" id="GO:0005525">
    <property type="term" value="F:GTP binding"/>
    <property type="evidence" value="ECO:0007669"/>
    <property type="project" value="UniProtKB-UniRule"/>
</dbReference>
<dbReference type="GO" id="GO:0000287">
    <property type="term" value="F:magnesium ion binding"/>
    <property type="evidence" value="ECO:0007669"/>
    <property type="project" value="UniProtKB-UniRule"/>
</dbReference>
<dbReference type="GO" id="GO:0044208">
    <property type="term" value="P:'de novo' AMP biosynthetic process"/>
    <property type="evidence" value="ECO:0007669"/>
    <property type="project" value="UniProtKB-UniRule"/>
</dbReference>
<dbReference type="GO" id="GO:0046040">
    <property type="term" value="P:IMP metabolic process"/>
    <property type="evidence" value="ECO:0007669"/>
    <property type="project" value="TreeGrafter"/>
</dbReference>
<dbReference type="CDD" id="cd03108">
    <property type="entry name" value="AdSS"/>
    <property type="match status" value="1"/>
</dbReference>
<dbReference type="FunFam" id="1.10.300.10:FF:000001">
    <property type="entry name" value="Adenylosuccinate synthetase"/>
    <property type="match status" value="1"/>
</dbReference>
<dbReference type="FunFam" id="3.90.170.10:FF:000001">
    <property type="entry name" value="Adenylosuccinate synthetase"/>
    <property type="match status" value="1"/>
</dbReference>
<dbReference type="Gene3D" id="3.40.440.10">
    <property type="entry name" value="Adenylosuccinate Synthetase, subunit A, domain 1"/>
    <property type="match status" value="1"/>
</dbReference>
<dbReference type="Gene3D" id="1.10.300.10">
    <property type="entry name" value="Adenylosuccinate Synthetase, subunit A, domain 2"/>
    <property type="match status" value="1"/>
</dbReference>
<dbReference type="Gene3D" id="3.90.170.10">
    <property type="entry name" value="Adenylosuccinate Synthetase, subunit A, domain 3"/>
    <property type="match status" value="1"/>
</dbReference>
<dbReference type="HAMAP" id="MF_00011">
    <property type="entry name" value="Adenylosucc_synth"/>
    <property type="match status" value="1"/>
</dbReference>
<dbReference type="InterPro" id="IPR018220">
    <property type="entry name" value="Adenylosuccin_syn_GTP-bd"/>
</dbReference>
<dbReference type="InterPro" id="IPR033128">
    <property type="entry name" value="Adenylosuccin_syn_Lys_AS"/>
</dbReference>
<dbReference type="InterPro" id="IPR042109">
    <property type="entry name" value="Adenylosuccinate_synth_dom1"/>
</dbReference>
<dbReference type="InterPro" id="IPR042110">
    <property type="entry name" value="Adenylosuccinate_synth_dom2"/>
</dbReference>
<dbReference type="InterPro" id="IPR042111">
    <property type="entry name" value="Adenylosuccinate_synth_dom3"/>
</dbReference>
<dbReference type="InterPro" id="IPR001114">
    <property type="entry name" value="Adenylosuccinate_synthetase"/>
</dbReference>
<dbReference type="InterPro" id="IPR027417">
    <property type="entry name" value="P-loop_NTPase"/>
</dbReference>
<dbReference type="NCBIfam" id="NF002223">
    <property type="entry name" value="PRK01117.1"/>
    <property type="match status" value="1"/>
</dbReference>
<dbReference type="NCBIfam" id="TIGR00184">
    <property type="entry name" value="purA"/>
    <property type="match status" value="1"/>
</dbReference>
<dbReference type="PANTHER" id="PTHR11846">
    <property type="entry name" value="ADENYLOSUCCINATE SYNTHETASE"/>
    <property type="match status" value="1"/>
</dbReference>
<dbReference type="PANTHER" id="PTHR11846:SF0">
    <property type="entry name" value="ADENYLOSUCCINATE SYNTHETASE"/>
    <property type="match status" value="1"/>
</dbReference>
<dbReference type="Pfam" id="PF00709">
    <property type="entry name" value="Adenylsucc_synt"/>
    <property type="match status" value="1"/>
</dbReference>
<dbReference type="SMART" id="SM00788">
    <property type="entry name" value="Adenylsucc_synt"/>
    <property type="match status" value="1"/>
</dbReference>
<dbReference type="SUPFAM" id="SSF52540">
    <property type="entry name" value="P-loop containing nucleoside triphosphate hydrolases"/>
    <property type="match status" value="1"/>
</dbReference>
<dbReference type="PROSITE" id="PS01266">
    <property type="entry name" value="ADENYLOSUCCIN_SYN_1"/>
    <property type="match status" value="1"/>
</dbReference>
<dbReference type="PROSITE" id="PS00513">
    <property type="entry name" value="ADENYLOSUCCIN_SYN_2"/>
    <property type="match status" value="1"/>
</dbReference>
<gene>
    <name evidence="1" type="primary">purA</name>
    <name type="ordered locus">RHECIAT_CH0003588</name>
</gene>
<organism>
    <name type="scientific">Rhizobium etli (strain CIAT 652)</name>
    <dbReference type="NCBI Taxonomy" id="491916"/>
    <lineage>
        <taxon>Bacteria</taxon>
        <taxon>Pseudomonadati</taxon>
        <taxon>Pseudomonadota</taxon>
        <taxon>Alphaproteobacteria</taxon>
        <taxon>Hyphomicrobiales</taxon>
        <taxon>Rhizobiaceae</taxon>
        <taxon>Rhizobium/Agrobacterium group</taxon>
        <taxon>Rhizobium</taxon>
    </lineage>
</organism>
<proteinExistence type="inferred from homology"/>
<keyword id="KW-0963">Cytoplasm</keyword>
<keyword id="KW-0342">GTP-binding</keyword>
<keyword id="KW-0436">Ligase</keyword>
<keyword id="KW-0460">Magnesium</keyword>
<keyword id="KW-0479">Metal-binding</keyword>
<keyword id="KW-0547">Nucleotide-binding</keyword>
<keyword id="KW-0658">Purine biosynthesis</keyword>
<comment type="function">
    <text evidence="1">Plays an important role in the de novo pathway of purine nucleotide biosynthesis. Catalyzes the first committed step in the biosynthesis of AMP from IMP.</text>
</comment>
<comment type="catalytic activity">
    <reaction evidence="1">
        <text>IMP + L-aspartate + GTP = N(6)-(1,2-dicarboxyethyl)-AMP + GDP + phosphate + 2 H(+)</text>
        <dbReference type="Rhea" id="RHEA:15753"/>
        <dbReference type="ChEBI" id="CHEBI:15378"/>
        <dbReference type="ChEBI" id="CHEBI:29991"/>
        <dbReference type="ChEBI" id="CHEBI:37565"/>
        <dbReference type="ChEBI" id="CHEBI:43474"/>
        <dbReference type="ChEBI" id="CHEBI:57567"/>
        <dbReference type="ChEBI" id="CHEBI:58053"/>
        <dbReference type="ChEBI" id="CHEBI:58189"/>
        <dbReference type="EC" id="6.3.4.4"/>
    </reaction>
</comment>
<comment type="cofactor">
    <cofactor evidence="1">
        <name>Mg(2+)</name>
        <dbReference type="ChEBI" id="CHEBI:18420"/>
    </cofactor>
    <text evidence="1">Binds 1 Mg(2+) ion per subunit.</text>
</comment>
<comment type="pathway">
    <text evidence="1">Purine metabolism; AMP biosynthesis via de novo pathway; AMP from IMP: step 1/2.</text>
</comment>
<comment type="subunit">
    <text evidence="1">Homodimer.</text>
</comment>
<comment type="subcellular location">
    <subcellularLocation>
        <location evidence="1">Cytoplasm</location>
    </subcellularLocation>
</comment>
<comment type="similarity">
    <text evidence="1">Belongs to the adenylosuccinate synthetase family.</text>
</comment>
<reference key="1">
    <citation type="journal article" date="2010" name="Appl. Environ. Microbiol.">
        <title>Conserved symbiotic plasmid DNA sequences in the multireplicon pangenomic structure of Rhizobium etli.</title>
        <authorList>
            <person name="Gonzalez V."/>
            <person name="Acosta J.L."/>
            <person name="Santamaria R.I."/>
            <person name="Bustos P."/>
            <person name="Fernandez J.L."/>
            <person name="Hernandez Gonzalez I.L."/>
            <person name="Diaz R."/>
            <person name="Flores M."/>
            <person name="Palacios R."/>
            <person name="Mora J."/>
            <person name="Davila G."/>
        </authorList>
    </citation>
    <scope>NUCLEOTIDE SEQUENCE [LARGE SCALE GENOMIC DNA]</scope>
    <source>
        <strain>CIAT 652</strain>
    </source>
</reference>
<feature type="chain" id="PRO_1000089328" description="Adenylosuccinate synthetase">
    <location>
        <begin position="1"/>
        <end position="432"/>
    </location>
</feature>
<feature type="active site" description="Proton acceptor" evidence="1">
    <location>
        <position position="13"/>
    </location>
</feature>
<feature type="active site" description="Proton donor" evidence="1">
    <location>
        <position position="41"/>
    </location>
</feature>
<feature type="binding site" evidence="1">
    <location>
        <begin position="12"/>
        <end position="18"/>
    </location>
    <ligand>
        <name>GTP</name>
        <dbReference type="ChEBI" id="CHEBI:37565"/>
    </ligand>
</feature>
<feature type="binding site" description="in other chain" evidence="1">
    <location>
        <begin position="13"/>
        <end position="16"/>
    </location>
    <ligand>
        <name>IMP</name>
        <dbReference type="ChEBI" id="CHEBI:58053"/>
        <note>ligand shared between dimeric partners</note>
    </ligand>
</feature>
<feature type="binding site" evidence="1">
    <location>
        <position position="13"/>
    </location>
    <ligand>
        <name>Mg(2+)</name>
        <dbReference type="ChEBI" id="CHEBI:18420"/>
    </ligand>
</feature>
<feature type="binding site" description="in other chain" evidence="1">
    <location>
        <begin position="38"/>
        <end position="41"/>
    </location>
    <ligand>
        <name>IMP</name>
        <dbReference type="ChEBI" id="CHEBI:58053"/>
        <note>ligand shared between dimeric partners</note>
    </ligand>
</feature>
<feature type="binding site" evidence="1">
    <location>
        <begin position="40"/>
        <end position="42"/>
    </location>
    <ligand>
        <name>GTP</name>
        <dbReference type="ChEBI" id="CHEBI:37565"/>
    </ligand>
</feature>
<feature type="binding site" evidence="1">
    <location>
        <position position="40"/>
    </location>
    <ligand>
        <name>Mg(2+)</name>
        <dbReference type="ChEBI" id="CHEBI:18420"/>
    </ligand>
</feature>
<feature type="binding site" description="in other chain" evidence="1">
    <location>
        <position position="132"/>
    </location>
    <ligand>
        <name>IMP</name>
        <dbReference type="ChEBI" id="CHEBI:58053"/>
        <note>ligand shared between dimeric partners</note>
    </ligand>
</feature>
<feature type="binding site" evidence="1">
    <location>
        <position position="146"/>
    </location>
    <ligand>
        <name>IMP</name>
        <dbReference type="ChEBI" id="CHEBI:58053"/>
        <note>ligand shared between dimeric partners</note>
    </ligand>
</feature>
<feature type="binding site" description="in other chain" evidence="1">
    <location>
        <position position="226"/>
    </location>
    <ligand>
        <name>IMP</name>
        <dbReference type="ChEBI" id="CHEBI:58053"/>
        <note>ligand shared between dimeric partners</note>
    </ligand>
</feature>
<feature type="binding site" description="in other chain" evidence="1">
    <location>
        <position position="241"/>
    </location>
    <ligand>
        <name>IMP</name>
        <dbReference type="ChEBI" id="CHEBI:58053"/>
        <note>ligand shared between dimeric partners</note>
    </ligand>
</feature>
<feature type="binding site" evidence="1">
    <location>
        <begin position="301"/>
        <end position="307"/>
    </location>
    <ligand>
        <name>substrate</name>
    </ligand>
</feature>
<feature type="binding site" description="in other chain" evidence="1">
    <location>
        <position position="305"/>
    </location>
    <ligand>
        <name>IMP</name>
        <dbReference type="ChEBI" id="CHEBI:58053"/>
        <note>ligand shared between dimeric partners</note>
    </ligand>
</feature>
<feature type="binding site" evidence="1">
    <location>
        <position position="307"/>
    </location>
    <ligand>
        <name>GTP</name>
        <dbReference type="ChEBI" id="CHEBI:37565"/>
    </ligand>
</feature>
<feature type="binding site" evidence="1">
    <location>
        <begin position="333"/>
        <end position="335"/>
    </location>
    <ligand>
        <name>GTP</name>
        <dbReference type="ChEBI" id="CHEBI:37565"/>
    </ligand>
</feature>
<feature type="binding site" evidence="1">
    <location>
        <begin position="415"/>
        <end position="417"/>
    </location>
    <ligand>
        <name>GTP</name>
        <dbReference type="ChEBI" id="CHEBI:37565"/>
    </ligand>
</feature>